<proteinExistence type="inferred from homology"/>
<protein>
    <recommendedName>
        <fullName evidence="1">Trigger factor</fullName>
        <shortName evidence="1">TF</shortName>
        <ecNumber evidence="1">5.2.1.8</ecNumber>
    </recommendedName>
    <alternativeName>
        <fullName evidence="1">PPIase</fullName>
    </alternativeName>
</protein>
<evidence type="ECO:0000255" key="1">
    <source>
        <dbReference type="HAMAP-Rule" id="MF_00303"/>
    </source>
</evidence>
<feature type="chain" id="PRO_0000256605" description="Trigger factor">
    <location>
        <begin position="1"/>
        <end position="453"/>
    </location>
</feature>
<feature type="domain" description="PPIase FKBP-type" evidence="1">
    <location>
        <begin position="171"/>
        <end position="256"/>
    </location>
</feature>
<accession>Q215J3</accession>
<name>TIG_RHOPB</name>
<keyword id="KW-0131">Cell cycle</keyword>
<keyword id="KW-0132">Cell division</keyword>
<keyword id="KW-0143">Chaperone</keyword>
<keyword id="KW-0963">Cytoplasm</keyword>
<keyword id="KW-0413">Isomerase</keyword>
<keyword id="KW-0697">Rotamase</keyword>
<gene>
    <name evidence="1" type="primary">tig</name>
    <name type="ordered locus">RPC_2391</name>
</gene>
<sequence>MQVKETVADGLKREFEVTLQAADIGAKVAARLDDMKDKVRLNGFRPGKVPIGHLKRIYGRSVTAETVEKLIRETNDQIFTERGFRLATEPKITMPSKENEVEEILAGKSDLNYTVAVEVVPTIELADFKSFSVEKPVAEVADSDVDEAINRIAMGNRSYADKGEGAKAESGDRVTISFKGTIDGTPFDGGTGEGIQVVIGSATFIPGFEDQLIGIGAGETRTLKVEFPKNYTNAELAGKPAEFETTATVLEAPQESVIDDEFAKTLGFESLDKLKEAARGRLTAEYAGATRQRVKRVLLDRLDETHRFEAPPSLVEQEFDLMWRSIKAEMESGGKTFESENTTEEAAKEEYRKIADRRVRLGLVLSEIGEKNKITVTDDEVSRAVIERARQMPGHEKEVWEYYRNNAEALAQLRAPIYEDKVVDFILELANVTEKTVSREELYKDDDAEKTAA</sequence>
<comment type="function">
    <text evidence="1">Involved in protein export. Acts as a chaperone by maintaining the newly synthesized protein in an open conformation. Functions as a peptidyl-prolyl cis-trans isomerase.</text>
</comment>
<comment type="catalytic activity">
    <reaction evidence="1">
        <text>[protein]-peptidylproline (omega=180) = [protein]-peptidylproline (omega=0)</text>
        <dbReference type="Rhea" id="RHEA:16237"/>
        <dbReference type="Rhea" id="RHEA-COMP:10747"/>
        <dbReference type="Rhea" id="RHEA-COMP:10748"/>
        <dbReference type="ChEBI" id="CHEBI:83833"/>
        <dbReference type="ChEBI" id="CHEBI:83834"/>
        <dbReference type="EC" id="5.2.1.8"/>
    </reaction>
</comment>
<comment type="subcellular location">
    <subcellularLocation>
        <location>Cytoplasm</location>
    </subcellularLocation>
    <text evidence="1">About half TF is bound to the ribosome near the polypeptide exit tunnel while the other half is free in the cytoplasm.</text>
</comment>
<comment type="domain">
    <text evidence="1">Consists of 3 domains; the N-terminus binds the ribosome, the middle domain has PPIase activity, while the C-terminus has intrinsic chaperone activity on its own.</text>
</comment>
<comment type="similarity">
    <text evidence="1">Belongs to the FKBP-type PPIase family. Tig subfamily.</text>
</comment>
<dbReference type="EC" id="5.2.1.8" evidence="1"/>
<dbReference type="EMBL" id="CP000301">
    <property type="protein sequence ID" value="ABD87943.1"/>
    <property type="molecule type" value="Genomic_DNA"/>
</dbReference>
<dbReference type="SMR" id="Q215J3"/>
<dbReference type="STRING" id="316056.RPC_2391"/>
<dbReference type="KEGG" id="rpc:RPC_2391"/>
<dbReference type="eggNOG" id="COG0544">
    <property type="taxonomic scope" value="Bacteria"/>
</dbReference>
<dbReference type="HOGENOM" id="CLU_033058_2_2_5"/>
<dbReference type="OrthoDB" id="9767721at2"/>
<dbReference type="GO" id="GO:0005737">
    <property type="term" value="C:cytoplasm"/>
    <property type="evidence" value="ECO:0007669"/>
    <property type="project" value="UniProtKB-SubCell"/>
</dbReference>
<dbReference type="GO" id="GO:0003755">
    <property type="term" value="F:peptidyl-prolyl cis-trans isomerase activity"/>
    <property type="evidence" value="ECO:0007669"/>
    <property type="project" value="UniProtKB-UniRule"/>
</dbReference>
<dbReference type="GO" id="GO:0044183">
    <property type="term" value="F:protein folding chaperone"/>
    <property type="evidence" value="ECO:0007669"/>
    <property type="project" value="TreeGrafter"/>
</dbReference>
<dbReference type="GO" id="GO:0043022">
    <property type="term" value="F:ribosome binding"/>
    <property type="evidence" value="ECO:0007669"/>
    <property type="project" value="TreeGrafter"/>
</dbReference>
<dbReference type="GO" id="GO:0051083">
    <property type="term" value="P:'de novo' cotranslational protein folding"/>
    <property type="evidence" value="ECO:0007669"/>
    <property type="project" value="TreeGrafter"/>
</dbReference>
<dbReference type="GO" id="GO:0051301">
    <property type="term" value="P:cell division"/>
    <property type="evidence" value="ECO:0007669"/>
    <property type="project" value="UniProtKB-KW"/>
</dbReference>
<dbReference type="GO" id="GO:0061077">
    <property type="term" value="P:chaperone-mediated protein folding"/>
    <property type="evidence" value="ECO:0007669"/>
    <property type="project" value="TreeGrafter"/>
</dbReference>
<dbReference type="GO" id="GO:0015031">
    <property type="term" value="P:protein transport"/>
    <property type="evidence" value="ECO:0007669"/>
    <property type="project" value="UniProtKB-UniRule"/>
</dbReference>
<dbReference type="GO" id="GO:0043335">
    <property type="term" value="P:protein unfolding"/>
    <property type="evidence" value="ECO:0007669"/>
    <property type="project" value="TreeGrafter"/>
</dbReference>
<dbReference type="FunFam" id="3.10.50.40:FF:000001">
    <property type="entry name" value="Trigger factor"/>
    <property type="match status" value="1"/>
</dbReference>
<dbReference type="Gene3D" id="3.10.50.40">
    <property type="match status" value="1"/>
</dbReference>
<dbReference type="Gene3D" id="3.30.70.1050">
    <property type="entry name" value="Trigger factor ribosome-binding domain"/>
    <property type="match status" value="1"/>
</dbReference>
<dbReference type="Gene3D" id="1.10.3120.10">
    <property type="entry name" value="Trigger factor, C-terminal domain"/>
    <property type="match status" value="1"/>
</dbReference>
<dbReference type="HAMAP" id="MF_00303">
    <property type="entry name" value="Trigger_factor_Tig"/>
    <property type="match status" value="1"/>
</dbReference>
<dbReference type="InterPro" id="IPR046357">
    <property type="entry name" value="PPIase_dom_sf"/>
</dbReference>
<dbReference type="InterPro" id="IPR001179">
    <property type="entry name" value="PPIase_FKBP_dom"/>
</dbReference>
<dbReference type="InterPro" id="IPR005215">
    <property type="entry name" value="Trig_fac"/>
</dbReference>
<dbReference type="InterPro" id="IPR008880">
    <property type="entry name" value="Trigger_fac_C"/>
</dbReference>
<dbReference type="InterPro" id="IPR037041">
    <property type="entry name" value="Trigger_fac_C_sf"/>
</dbReference>
<dbReference type="InterPro" id="IPR008881">
    <property type="entry name" value="Trigger_fac_ribosome-bd_bac"/>
</dbReference>
<dbReference type="InterPro" id="IPR036611">
    <property type="entry name" value="Trigger_fac_ribosome-bd_sf"/>
</dbReference>
<dbReference type="InterPro" id="IPR027304">
    <property type="entry name" value="Trigger_fact/SurA_dom_sf"/>
</dbReference>
<dbReference type="NCBIfam" id="TIGR00115">
    <property type="entry name" value="tig"/>
    <property type="match status" value="1"/>
</dbReference>
<dbReference type="PANTHER" id="PTHR30560">
    <property type="entry name" value="TRIGGER FACTOR CHAPERONE AND PEPTIDYL-PROLYL CIS/TRANS ISOMERASE"/>
    <property type="match status" value="1"/>
</dbReference>
<dbReference type="PANTHER" id="PTHR30560:SF3">
    <property type="entry name" value="TRIGGER FACTOR-LIKE PROTEIN TIG, CHLOROPLASTIC"/>
    <property type="match status" value="1"/>
</dbReference>
<dbReference type="Pfam" id="PF00254">
    <property type="entry name" value="FKBP_C"/>
    <property type="match status" value="1"/>
</dbReference>
<dbReference type="Pfam" id="PF05698">
    <property type="entry name" value="Trigger_C"/>
    <property type="match status" value="1"/>
</dbReference>
<dbReference type="Pfam" id="PF05697">
    <property type="entry name" value="Trigger_N"/>
    <property type="match status" value="1"/>
</dbReference>
<dbReference type="PIRSF" id="PIRSF003095">
    <property type="entry name" value="Trigger_factor"/>
    <property type="match status" value="1"/>
</dbReference>
<dbReference type="SUPFAM" id="SSF54534">
    <property type="entry name" value="FKBP-like"/>
    <property type="match status" value="1"/>
</dbReference>
<dbReference type="SUPFAM" id="SSF109998">
    <property type="entry name" value="Triger factor/SurA peptide-binding domain-like"/>
    <property type="match status" value="1"/>
</dbReference>
<dbReference type="SUPFAM" id="SSF102735">
    <property type="entry name" value="Trigger factor ribosome-binding domain"/>
    <property type="match status" value="1"/>
</dbReference>
<dbReference type="PROSITE" id="PS50059">
    <property type="entry name" value="FKBP_PPIASE"/>
    <property type="match status" value="1"/>
</dbReference>
<organism>
    <name type="scientific">Rhodopseudomonas palustris (strain BisB18)</name>
    <dbReference type="NCBI Taxonomy" id="316056"/>
    <lineage>
        <taxon>Bacteria</taxon>
        <taxon>Pseudomonadati</taxon>
        <taxon>Pseudomonadota</taxon>
        <taxon>Alphaproteobacteria</taxon>
        <taxon>Hyphomicrobiales</taxon>
        <taxon>Nitrobacteraceae</taxon>
        <taxon>Rhodopseudomonas</taxon>
    </lineage>
</organism>
<reference key="1">
    <citation type="submission" date="2006-03" db="EMBL/GenBank/DDBJ databases">
        <title>Complete sequence of Rhodopseudomonas palustris BisB18.</title>
        <authorList>
            <consortium name="US DOE Joint Genome Institute"/>
            <person name="Copeland A."/>
            <person name="Lucas S."/>
            <person name="Lapidus A."/>
            <person name="Barry K."/>
            <person name="Detter J.C."/>
            <person name="Glavina del Rio T."/>
            <person name="Hammon N."/>
            <person name="Israni S."/>
            <person name="Dalin E."/>
            <person name="Tice H."/>
            <person name="Pitluck S."/>
            <person name="Chain P."/>
            <person name="Malfatti S."/>
            <person name="Shin M."/>
            <person name="Vergez L."/>
            <person name="Schmutz J."/>
            <person name="Larimer F."/>
            <person name="Land M."/>
            <person name="Hauser L."/>
            <person name="Pelletier D.A."/>
            <person name="Kyrpides N."/>
            <person name="Anderson I."/>
            <person name="Oda Y."/>
            <person name="Harwood C.S."/>
            <person name="Richardson P."/>
        </authorList>
    </citation>
    <scope>NUCLEOTIDE SEQUENCE [LARGE SCALE GENOMIC DNA]</scope>
    <source>
        <strain>BisB18</strain>
    </source>
</reference>